<name>MUTS2_THENN</name>
<accession>B9K937</accession>
<gene>
    <name evidence="1" type="primary">mutS2</name>
    <name evidence="1" type="synonym">rqcU</name>
    <name type="ordered locus">CTN_1294</name>
</gene>
<keyword id="KW-0067">ATP-binding</keyword>
<keyword id="KW-0238">DNA-binding</keyword>
<keyword id="KW-0255">Endonuclease</keyword>
<keyword id="KW-0378">Hydrolase</keyword>
<keyword id="KW-0540">Nuclease</keyword>
<keyword id="KW-0547">Nucleotide-binding</keyword>
<keyword id="KW-0694">RNA-binding</keyword>
<keyword id="KW-0699">rRNA-binding</keyword>
<reference key="1">
    <citation type="submission" date="2007-11" db="EMBL/GenBank/DDBJ databases">
        <title>The genome sequence of the hyperthermophilic bacterium Thermotoga neapolitana.</title>
        <authorList>
            <person name="Lim S.K."/>
            <person name="Kim J.S."/>
            <person name="Cha S.H."/>
            <person name="Park B.C."/>
            <person name="Lee D.S."/>
            <person name="Tae H.S."/>
            <person name="Kim S.-J."/>
            <person name="Kim J.J."/>
            <person name="Park K.J."/>
            <person name="Lee S.Y."/>
        </authorList>
    </citation>
    <scope>NUCLEOTIDE SEQUENCE [LARGE SCALE GENOMIC DNA]</scope>
    <source>
        <strain>ATCC 49049 / DSM 4359 / NBRC 107923 / NS-E</strain>
    </source>
</reference>
<sequence length="757" mass="86259">MDYLEVLDFPKVVDLVKRHTFSDLGKRHLDTLKPTVNPWNELELVEELLNYLTRWGEPPIKGLSDITPEMEKLKAGSSLEPWELLRVSSFLEGCDILKNDLTRREYQKLKETFSQLVSFEEFVKEVNRCIEQNGEVSNRASPKLKEIRSEKRSLSTEIKKRADDFVKNHSQILQEQMYVYRDGRYLFPVKASMKRSVRGIVHHLSSSGATVFMEPEEFVELNNRMRLLEEEERLEISRILRHLTNMLLSNLKDLEKNIDLIAHFDSLYARAKFAKENNGIVVKPSSRIKLVNARHPLIPKDRVVPINLELPPNKKGVIITGPNMGGKTVTVKTVGLFTALMMSGFPLLCDEGTELKIFPKIMADIGEEQSIEQSLSTFSSHMKRIVEIVRNADSDSLVILDELGSGTDPVEGAALAIAIIEDLLEKGATLFVTTHLTPVKVFAMNHPLLLNASMEFDPETLSPTYRVLVGVPGGSHAFQIAEKLGLEKRIIENARSRLSQEEMELEGLIRSLHEKISLLEEEKRKLQKEKEEYMKLRAKYEEDYKKLRRMKIEEFDKELKELNDYIRKVKKELDQAIHVAKSGSVEEMRKTVKTLEKEREDLKKKAIEEEAEEEINVGDHVRMEGGTSVGKVVEVKGNTALVDFGFLRVKVPLGKLKKAKKKEEEDREKGTHFVSSFRTEIDIRGMTVEEAEPVVKKFIDDLVMNGIKKGYIIHGKGTGKLATGVWEILRKDRRVVSFRFGTPSEGGTGVTVVEVEV</sequence>
<dbReference type="EC" id="3.1.-.-" evidence="1"/>
<dbReference type="EC" id="3.6.4.-" evidence="1"/>
<dbReference type="EMBL" id="CP000916">
    <property type="protein sequence ID" value="ACM23470.1"/>
    <property type="molecule type" value="Genomic_DNA"/>
</dbReference>
<dbReference type="RefSeq" id="WP_015919769.1">
    <property type="nucleotide sequence ID" value="NC_011978.1"/>
</dbReference>
<dbReference type="SMR" id="B9K937"/>
<dbReference type="STRING" id="309803.CTN_1294"/>
<dbReference type="KEGG" id="tna:CTN_1294"/>
<dbReference type="eggNOG" id="COG1193">
    <property type="taxonomic scope" value="Bacteria"/>
</dbReference>
<dbReference type="HOGENOM" id="CLU_011252_2_1_0"/>
<dbReference type="Proteomes" id="UP000000445">
    <property type="component" value="Chromosome"/>
</dbReference>
<dbReference type="GO" id="GO:0005524">
    <property type="term" value="F:ATP binding"/>
    <property type="evidence" value="ECO:0007669"/>
    <property type="project" value="UniProtKB-UniRule"/>
</dbReference>
<dbReference type="GO" id="GO:0016887">
    <property type="term" value="F:ATP hydrolysis activity"/>
    <property type="evidence" value="ECO:0007669"/>
    <property type="project" value="InterPro"/>
</dbReference>
<dbReference type="GO" id="GO:0140664">
    <property type="term" value="F:ATP-dependent DNA damage sensor activity"/>
    <property type="evidence" value="ECO:0007669"/>
    <property type="project" value="InterPro"/>
</dbReference>
<dbReference type="GO" id="GO:0004519">
    <property type="term" value="F:endonuclease activity"/>
    <property type="evidence" value="ECO:0007669"/>
    <property type="project" value="UniProtKB-UniRule"/>
</dbReference>
<dbReference type="GO" id="GO:0030983">
    <property type="term" value="F:mismatched DNA binding"/>
    <property type="evidence" value="ECO:0007669"/>
    <property type="project" value="InterPro"/>
</dbReference>
<dbReference type="GO" id="GO:0043023">
    <property type="term" value="F:ribosomal large subunit binding"/>
    <property type="evidence" value="ECO:0007669"/>
    <property type="project" value="UniProtKB-UniRule"/>
</dbReference>
<dbReference type="GO" id="GO:0019843">
    <property type="term" value="F:rRNA binding"/>
    <property type="evidence" value="ECO:0007669"/>
    <property type="project" value="UniProtKB-UniRule"/>
</dbReference>
<dbReference type="GO" id="GO:0006298">
    <property type="term" value="P:mismatch repair"/>
    <property type="evidence" value="ECO:0007669"/>
    <property type="project" value="InterPro"/>
</dbReference>
<dbReference type="GO" id="GO:0045910">
    <property type="term" value="P:negative regulation of DNA recombination"/>
    <property type="evidence" value="ECO:0007669"/>
    <property type="project" value="InterPro"/>
</dbReference>
<dbReference type="GO" id="GO:0072344">
    <property type="term" value="P:rescue of stalled ribosome"/>
    <property type="evidence" value="ECO:0007669"/>
    <property type="project" value="UniProtKB-UniRule"/>
</dbReference>
<dbReference type="CDD" id="cd03280">
    <property type="entry name" value="ABC_MutS2"/>
    <property type="match status" value="1"/>
</dbReference>
<dbReference type="FunFam" id="3.40.50.300:FF:000830">
    <property type="entry name" value="Endonuclease MutS2"/>
    <property type="match status" value="1"/>
</dbReference>
<dbReference type="Gene3D" id="1.10.1420.10">
    <property type="match status" value="2"/>
</dbReference>
<dbReference type="Gene3D" id="3.30.1370.110">
    <property type="match status" value="1"/>
</dbReference>
<dbReference type="Gene3D" id="3.40.50.300">
    <property type="entry name" value="P-loop containing nucleotide triphosphate hydrolases"/>
    <property type="match status" value="1"/>
</dbReference>
<dbReference type="HAMAP" id="MF_00092">
    <property type="entry name" value="MutS2"/>
    <property type="match status" value="1"/>
</dbReference>
<dbReference type="InterPro" id="IPR000432">
    <property type="entry name" value="DNA_mismatch_repair_MutS_C"/>
</dbReference>
<dbReference type="InterPro" id="IPR007696">
    <property type="entry name" value="DNA_mismatch_repair_MutS_core"/>
</dbReference>
<dbReference type="InterPro" id="IPR036187">
    <property type="entry name" value="DNA_mismatch_repair_MutS_sf"/>
</dbReference>
<dbReference type="InterPro" id="IPR046893">
    <property type="entry name" value="MSSS"/>
</dbReference>
<dbReference type="InterPro" id="IPR045076">
    <property type="entry name" value="MutS"/>
</dbReference>
<dbReference type="InterPro" id="IPR005747">
    <property type="entry name" value="MutS2"/>
</dbReference>
<dbReference type="InterPro" id="IPR027417">
    <property type="entry name" value="P-loop_NTPase"/>
</dbReference>
<dbReference type="InterPro" id="IPR002625">
    <property type="entry name" value="Smr_dom"/>
</dbReference>
<dbReference type="InterPro" id="IPR036063">
    <property type="entry name" value="Smr_dom_sf"/>
</dbReference>
<dbReference type="NCBIfam" id="TIGR01069">
    <property type="entry name" value="mutS2"/>
    <property type="match status" value="1"/>
</dbReference>
<dbReference type="PANTHER" id="PTHR48466:SF2">
    <property type="entry name" value="OS10G0509000 PROTEIN"/>
    <property type="match status" value="1"/>
</dbReference>
<dbReference type="PANTHER" id="PTHR48466">
    <property type="entry name" value="OS10G0509000 PROTEIN-RELATED"/>
    <property type="match status" value="1"/>
</dbReference>
<dbReference type="Pfam" id="PF20297">
    <property type="entry name" value="MSSS"/>
    <property type="match status" value="1"/>
</dbReference>
<dbReference type="Pfam" id="PF00488">
    <property type="entry name" value="MutS_V"/>
    <property type="match status" value="1"/>
</dbReference>
<dbReference type="Pfam" id="PF01713">
    <property type="entry name" value="Smr"/>
    <property type="match status" value="1"/>
</dbReference>
<dbReference type="PIRSF" id="PIRSF005814">
    <property type="entry name" value="MutS_YshD"/>
    <property type="match status" value="1"/>
</dbReference>
<dbReference type="SMART" id="SM00534">
    <property type="entry name" value="MUTSac"/>
    <property type="match status" value="1"/>
</dbReference>
<dbReference type="SMART" id="SM00533">
    <property type="entry name" value="MUTSd"/>
    <property type="match status" value="1"/>
</dbReference>
<dbReference type="SMART" id="SM00463">
    <property type="entry name" value="SMR"/>
    <property type="match status" value="1"/>
</dbReference>
<dbReference type="SUPFAM" id="SSF48334">
    <property type="entry name" value="DNA repair protein MutS, domain III"/>
    <property type="match status" value="1"/>
</dbReference>
<dbReference type="SUPFAM" id="SSF52540">
    <property type="entry name" value="P-loop containing nucleoside triphosphate hydrolases"/>
    <property type="match status" value="1"/>
</dbReference>
<dbReference type="SUPFAM" id="SSF160443">
    <property type="entry name" value="SMR domain-like"/>
    <property type="match status" value="1"/>
</dbReference>
<dbReference type="PROSITE" id="PS00486">
    <property type="entry name" value="DNA_MISMATCH_REPAIR_2"/>
    <property type="match status" value="1"/>
</dbReference>
<dbReference type="PROSITE" id="PS50828">
    <property type="entry name" value="SMR"/>
    <property type="match status" value="1"/>
</dbReference>
<evidence type="ECO:0000255" key="1">
    <source>
        <dbReference type="HAMAP-Rule" id="MF_00092"/>
    </source>
</evidence>
<comment type="function">
    <text evidence="1">Endonuclease that is involved in the suppression of homologous recombination and thus may have a key role in the control of bacterial genetic diversity.</text>
</comment>
<comment type="function">
    <text evidence="1">Acts as a ribosome collision sensor, splitting the ribosome into its 2 subunits. Detects stalled/collided 70S ribosomes which it binds and splits by an ATP-hydrolysis driven conformational change. Acts upstream of the ribosome quality control system (RQC), a ribosome-associated complex that mediates the extraction of incompletely synthesized nascent chains from stalled ribosomes and their subsequent degradation. Probably generates substrates for RQC.</text>
</comment>
<comment type="subunit">
    <text evidence="1">Homodimer. Binds to stalled ribosomes, contacting rRNA.</text>
</comment>
<comment type="similarity">
    <text evidence="1">Belongs to the DNA mismatch repair MutS family. MutS2 subfamily.</text>
</comment>
<feature type="chain" id="PRO_1000118573" description="Endonuclease MutS2">
    <location>
        <begin position="1"/>
        <end position="757"/>
    </location>
</feature>
<feature type="domain" description="Smr" evidence="1">
    <location>
        <begin position="681"/>
        <end position="756"/>
    </location>
</feature>
<feature type="binding site" evidence="1">
    <location>
        <begin position="321"/>
        <end position="328"/>
    </location>
    <ligand>
        <name>ATP</name>
        <dbReference type="ChEBI" id="CHEBI:30616"/>
    </ligand>
</feature>
<organism>
    <name type="scientific">Thermotoga neapolitana (strain ATCC 49049 / DSM 4359 / NBRC 107923 / NS-E)</name>
    <dbReference type="NCBI Taxonomy" id="309803"/>
    <lineage>
        <taxon>Bacteria</taxon>
        <taxon>Thermotogati</taxon>
        <taxon>Thermotogota</taxon>
        <taxon>Thermotogae</taxon>
        <taxon>Thermotogales</taxon>
        <taxon>Thermotogaceae</taxon>
        <taxon>Thermotoga</taxon>
    </lineage>
</organism>
<proteinExistence type="inferred from homology"/>
<protein>
    <recommendedName>
        <fullName evidence="1">Endonuclease MutS2</fullName>
        <ecNumber evidence="1">3.1.-.-</ecNumber>
    </recommendedName>
    <alternativeName>
        <fullName evidence="1">Ribosome-associated protein quality control-upstream factor</fullName>
        <shortName evidence="1">RQC-upstream factor</shortName>
        <shortName evidence="1">RqcU</shortName>
        <ecNumber evidence="1">3.6.4.-</ecNumber>
    </alternativeName>
</protein>